<gene>
    <name type="primary">SLCO1A2</name>
    <name type="synonym">OATP</name>
    <name type="synonym">OATP1</name>
    <name type="synonym">OATP1A2</name>
    <name type="synonym">SLC21A3</name>
</gene>
<feature type="chain" id="PRO_0000191042" description="Solute carrier organic anion transporter family member 1A2">
    <location>
        <begin position="1"/>
        <end position="670"/>
    </location>
</feature>
<feature type="topological domain" description="Cytoplasmic" evidence="3">
    <location>
        <begin position="1"/>
        <end position="20"/>
    </location>
</feature>
<feature type="transmembrane region" description="Helical; Name=1" evidence="3">
    <location>
        <begin position="21"/>
        <end position="40"/>
    </location>
</feature>
<feature type="topological domain" description="Extracellular" evidence="3">
    <location>
        <begin position="41"/>
        <end position="59"/>
    </location>
</feature>
<feature type="transmembrane region" description="Helical; Name=2" evidence="3">
    <location>
        <begin position="60"/>
        <end position="80"/>
    </location>
</feature>
<feature type="topological domain" description="Cytoplasmic" evidence="3">
    <location>
        <begin position="81"/>
        <end position="86"/>
    </location>
</feature>
<feature type="transmembrane region" description="Helical; Name=3" evidence="3">
    <location>
        <begin position="87"/>
        <end position="111"/>
    </location>
</feature>
<feature type="topological domain" description="Extracellular" evidence="3">
    <location>
        <begin position="112"/>
        <end position="155"/>
    </location>
</feature>
<feature type="transmembrane region" description="Helical; Name=4" evidence="3">
    <location>
        <begin position="156"/>
        <end position="184"/>
    </location>
</feature>
<feature type="topological domain" description="Cytoplasmic" evidence="3">
    <location>
        <begin position="185"/>
        <end position="203"/>
    </location>
</feature>
<feature type="transmembrane region" description="Helical; Name=5" evidence="3">
    <location>
        <begin position="204"/>
        <end position="224"/>
    </location>
</feature>
<feature type="topological domain" description="Extracellular" evidence="3">
    <location>
        <begin position="225"/>
        <end position="242"/>
    </location>
</feature>
<feature type="transmembrane region" description="Helical; Name=6" evidence="3">
    <location>
        <begin position="243"/>
        <end position="267"/>
    </location>
</feature>
<feature type="topological domain" description="Cytoplasmic" evidence="3">
    <location>
        <begin position="268"/>
        <end position="311"/>
    </location>
</feature>
<feature type="transmembrane region" description="Helical; Name=7" evidence="3">
    <location>
        <begin position="312"/>
        <end position="333"/>
    </location>
</feature>
<feature type="topological domain" description="Extracellular" evidence="3">
    <location>
        <begin position="334"/>
        <end position="353"/>
    </location>
</feature>
<feature type="transmembrane region" description="Helical; Name=8" evidence="3">
    <location>
        <begin position="354"/>
        <end position="377"/>
    </location>
</feature>
<feature type="topological domain" description="Cytoplasmic" evidence="3">
    <location>
        <begin position="378"/>
        <end position="381"/>
    </location>
</feature>
<feature type="transmembrane region" description="Helical; Name=9" evidence="3">
    <location>
        <begin position="382"/>
        <end position="405"/>
    </location>
</feature>
<feature type="topological domain" description="Extracellular" evidence="3">
    <location>
        <begin position="406"/>
        <end position="513"/>
    </location>
</feature>
<feature type="transmembrane region" description="Helical; Name=10" evidence="3">
    <location>
        <begin position="514"/>
        <end position="536"/>
    </location>
</feature>
<feature type="topological domain" description="Cytoplasmic" evidence="3">
    <location>
        <begin position="537"/>
        <end position="545"/>
    </location>
</feature>
<feature type="transmembrane region" description="Helical; Name=11" evidence="3">
    <location>
        <begin position="546"/>
        <end position="571"/>
    </location>
</feature>
<feature type="topological domain" description="Extracellular" evidence="3">
    <location>
        <begin position="572"/>
        <end position="605"/>
    </location>
</feature>
<feature type="transmembrane region" description="Helical; Name=12" evidence="3">
    <location>
        <begin position="606"/>
        <end position="623"/>
    </location>
</feature>
<feature type="topological domain" description="Cytoplasmic" evidence="3">
    <location>
        <begin position="624"/>
        <end position="670"/>
    </location>
</feature>
<feature type="domain" description="Kazal-like" evidence="4">
    <location>
        <begin position="433"/>
        <end position="488"/>
    </location>
</feature>
<feature type="glycosylation site" description="N-linked (GlcNAc...) asparagine" evidence="3">
    <location>
        <position position="124"/>
    </location>
</feature>
<feature type="glycosylation site" description="N-linked (GlcNAc...) asparagine" evidence="3">
    <location>
        <position position="135"/>
    </location>
</feature>
<feature type="glycosylation site" description="N-linked (GlcNAc...) asparagine" evidence="3">
    <location>
        <position position="412"/>
    </location>
</feature>
<feature type="glycosylation site" description="N-linked (GlcNAc...) asparagine" evidence="3">
    <location>
        <position position="419"/>
    </location>
</feature>
<feature type="disulfide bond" evidence="4">
    <location>
        <begin position="439"/>
        <end position="469"/>
    </location>
</feature>
<feature type="disulfide bond" evidence="4">
    <location>
        <begin position="445"/>
        <end position="465"/>
    </location>
</feature>
<feature type="disulfide bond" evidence="4">
    <location>
        <begin position="454"/>
        <end position="486"/>
    </location>
</feature>
<feature type="splice variant" id="VSP_006130" description="In isoform OATP1b." evidence="24">
    <original>MGETEKRIETHRIRCLSKL</original>
    <variation>MFLTKNCKQEQERVESA</variation>
    <location>
        <begin position="1"/>
        <end position="19"/>
    </location>
</feature>
<feature type="splice variant" id="VSP_006131" description="In isoform OATP1b." evidence="24">
    <original>AGIPAPIYFGALMDSTCLHWGTL</original>
    <variation>GKNSYFFPHPIRTILLLLFFITL</variation>
    <location>
        <begin position="559"/>
        <end position="581"/>
    </location>
</feature>
<feature type="splice variant" id="VSP_006132" description="In isoform OATP1b." evidence="24">
    <location>
        <begin position="582"/>
        <end position="670"/>
    </location>
</feature>
<feature type="sequence variant" id="VAR_024644" description="In dbSNP:rs10841795." evidence="9">
    <original>I</original>
    <variation>T</variation>
    <location>
        <position position="13"/>
    </location>
</feature>
<feature type="sequence variant" id="VAR_020289" description="In dbSNP:rs11568567." evidence="9">
    <original>N</original>
    <variation>Y</variation>
    <location>
        <position position="128"/>
    </location>
</feature>
<feature type="sequence variant" id="VAR_020290" description="In dbSNP:rs45502302." evidence="9">
    <original>N</original>
    <variation>I</variation>
    <location>
        <position position="135"/>
    </location>
</feature>
<feature type="sequence variant" id="VAR_020291" description="In dbSNP:rs11568563." evidence="9">
    <original>E</original>
    <variation>D</variation>
    <location>
        <position position="172"/>
    </location>
</feature>
<feature type="sequence variant" id="VAR_036823" description="In dbSNP:rs750165758." evidence="9">
    <original>A</original>
    <variation>T</variation>
    <location>
        <position position="187"/>
    </location>
</feature>
<feature type="sequence variant" id="VAR_036409" description="In a colorectal cancer sample; somatic mutation." evidence="10">
    <original>V</original>
    <variation>I</variation>
    <location>
        <position position="220"/>
    </location>
</feature>
<feature type="sequence variant" id="VAR_020292" description="In dbSNP:rs45628437.">
    <original>I</original>
    <variation>V</variation>
    <location>
        <position position="355"/>
    </location>
</feature>
<feature type="sequence variant" id="VAR_020293" description="In dbSNP:rs11568557." evidence="9">
    <original>T</original>
    <variation>S</variation>
    <location>
        <position position="668"/>
    </location>
</feature>
<name>SO1A2_HUMAN</name>
<reference key="1">
    <citation type="journal article" date="1995" name="Gastroenterology">
        <title>Molecular and functional characterization of an organic anion transporting polypeptide cloned from human liver.</title>
        <authorList>
            <person name="Kullak-Ublick G.-A."/>
            <person name="Hagenbuch B."/>
            <person name="Stieger B."/>
            <person name="Schteingart C.D."/>
            <person name="Hofmann A.F."/>
            <person name="Wolkoff A.W."/>
            <person name="Meier P.J."/>
        </authorList>
    </citation>
    <scope>NUCLEOTIDE SEQUENCE [MRNA] (ISOFORM OATP1A)</scope>
    <scope>FUNCTION</scope>
    <scope>TRANSPORTER ACTIVITY</scope>
    <scope>BIOPHYSICOCHEMICAL PROPERTIES</scope>
    <scope>TISSUE SPECIFICITY</scope>
    <source>
        <tissue>Liver</tissue>
    </source>
</reference>
<reference key="2">
    <citation type="submission" date="1998-08" db="EMBL/GenBank/DDBJ databases">
        <title>Isolation of human neural alternative form of organic anion transporter subtype.</title>
        <authorList>
            <person name="Abe T."/>
            <person name="Kakyo M."/>
            <person name="Yawo H."/>
        </authorList>
    </citation>
    <scope>NUCLEOTIDE SEQUENCE (ISOFORM OATP1B)</scope>
</reference>
<reference key="3">
    <citation type="journal article" date="2000" name="J. Biol. Chem.">
        <title>Localization and genomic organization of a new hepatocellular organic anion transporting polypeptide.</title>
        <authorList>
            <person name="Koenig J."/>
            <person name="Cui Y."/>
            <person name="Nies A.T."/>
            <person name="Keppler D."/>
        </authorList>
    </citation>
    <scope>NUCLEOTIDE SEQUENCE (ISOFORM OATP1A)</scope>
</reference>
<reference key="4">
    <citation type="journal article" date="2001" name="Mol. Cell. Biol.">
        <title>Antisense promoter of human L1 retrotransposon drives transcription of adjacent cellular genes.</title>
        <authorList>
            <person name="Speek M."/>
        </authorList>
    </citation>
    <scope>NUCLEOTIDE SEQUENCE (ISOFORM OATP1A)</scope>
    <source>
        <tissue>Teratocarcinoma</tissue>
    </source>
</reference>
<reference key="5">
    <citation type="submission" date="1999-12" db="EMBL/GenBank/DDBJ databases">
        <title>Upstream region of the human organic anion transporting polypeptide A (OATP-A) gene.</title>
        <authorList>
            <person name="Kullak-Ublick G.-A."/>
        </authorList>
    </citation>
    <scope>NUCLEOTIDE SEQUENCE OF 1-20</scope>
</reference>
<reference key="6">
    <citation type="journal article" date="1998" name="FEBS Lett.">
        <title>Dehydroepiandrosterone sulfate (DHEAS): identification of a carrier protein in human liver and brain.</title>
        <authorList>
            <person name="Kullak-Ublick G.A."/>
            <person name="Fisch T."/>
            <person name="Oswald M."/>
            <person name="Hagenbuch B."/>
            <person name="Meier P.J."/>
            <person name="Beuers U."/>
            <person name="Paumgartner G."/>
        </authorList>
    </citation>
    <scope>FUNCTION</scope>
    <scope>TRANSPORTER ACTIVITY</scope>
    <scope>BIOPHYSICOCHEMICAL PROPERTIES</scope>
    <scope>TISSUE SPECIFICITY</scope>
</reference>
<reference key="7">
    <citation type="journal article" date="2000" name="Biochem. Biophys. Res. Commun.">
        <title>Molecular identification and characterization of novel members of the human organic anion transporter (OATP) family.</title>
        <authorList>
            <person name="Tamai I."/>
            <person name="Nezu J."/>
            <person name="Uchino H."/>
            <person name="Sai Y."/>
            <person name="Oku A."/>
            <person name="Shimane M."/>
            <person name="Tsuji A."/>
        </authorList>
    </citation>
    <scope>TISSUE SPECIFICITY</scope>
    <source>
        <tissue>Brain</tissue>
    </source>
</reference>
<reference key="8">
    <citation type="journal article" date="2001" name="Gastroenterology">
        <title>Organic anion-transporting polypeptide B (OATP-B) and its functional comparison with three other OATPs of human liver.</title>
        <authorList>
            <person name="Kullak-Ublick G.A."/>
            <person name="Ismair M.G."/>
            <person name="Stieger B."/>
            <person name="Landmann L."/>
            <person name="Huber R."/>
            <person name="Pizzagalli F."/>
            <person name="Fattinger K."/>
            <person name="Meier P.J."/>
            <person name="Hagenbuch B."/>
        </authorList>
    </citation>
    <scope>FUNCTION</scope>
</reference>
<reference key="9">
    <citation type="journal article" date="2003" name="Am. J. Physiol.">
        <title>Characterization and identification of steroid sulfate transporters of human placenta.</title>
        <authorList>
            <person name="Ugele B."/>
            <person name="St-Pierre M.V."/>
            <person name="Pihusch M."/>
            <person name="Bahn A."/>
            <person name="Hantschmann P."/>
        </authorList>
    </citation>
    <scope>TISSUE SPECIFICITY</scope>
</reference>
<reference key="10">
    <citation type="journal article" date="2003" name="Biochem. J.">
        <title>Role of organic anion-transporting polypeptides, OATP-A, OATP-C and OATP-8, in the human placenta-maternal liver tandem excretory pathway for foetal bilirubin.</title>
        <authorList>
            <person name="Briz O."/>
            <person name="Serrano M.A."/>
            <person name="MacIas R.I."/>
            <person name="Gonzalez-Gallego J."/>
            <person name="Marin J.J."/>
        </authorList>
    </citation>
    <scope>FUNCTION</scope>
    <scope>TRANSPORTER ACTIVITY</scope>
</reference>
<reference key="11">
    <citation type="journal article" date="2007" name="Clin. Pharmacol. Ther.">
        <title>Naringin is a major and selective clinical inhibitor of organic anion-transporting polypeptide 1A2 (OATP1A2) in grapefruit juice.</title>
        <authorList>
            <person name="Bailey D.G."/>
            <person name="Dresser G.K."/>
            <person name="Leake B.F."/>
            <person name="Kim R.B."/>
        </authorList>
    </citation>
    <scope>FUNCTION</scope>
    <scope>ACTIVITY REGULATION</scope>
</reference>
<reference key="12">
    <citation type="journal article" date="2009" name="Am. J. Physiol.">
        <title>Mechanisms of pH-gradient driven transport mediated by organic anion polypeptide transporters.</title>
        <authorList>
            <person name="Leuthold S."/>
            <person name="Hagenbuch B."/>
            <person name="Mohebbi N."/>
            <person name="Wagner C.A."/>
            <person name="Meier P.J."/>
            <person name="Stieger B."/>
        </authorList>
    </citation>
    <scope>FUNCTION</scope>
    <scope>TRANSPORTER ACTIVITY</scope>
    <scope>BIOPHYSICOCHEMICAL PROPERTIES</scope>
    <scope>DOMAIN</scope>
</reference>
<reference key="13">
    <citation type="journal article" date="2010" name="Mol. Biosyst.">
        <title>Transport of thyroid hormones is selectively inhibited by 3-iodothyronamine.</title>
        <authorList>
            <person name="Ianculescu A.G."/>
            <person name="Friesema E.C."/>
            <person name="Visser T.J."/>
            <person name="Giacomini K.M."/>
            <person name="Scanlan T.S."/>
        </authorList>
    </citation>
    <scope>FUNCTION</scope>
    <scope>TRANSPORTER ACTIVITY</scope>
</reference>
<reference key="14">
    <citation type="journal article" date="2010" name="Pharm. Res.">
        <title>Intestinal absorption of HMG-CoA reductase inhibitor pravastatin mediated by organic anion transporting polypeptide.</title>
        <authorList>
            <person name="Shirasaka Y."/>
            <person name="Suzuki K."/>
            <person name="Nakanishi T."/>
            <person name="Tamai I."/>
        </authorList>
    </citation>
    <scope>FUNCTION</scope>
    <scope>ACTIVITY REGULATION</scope>
</reference>
<reference key="15">
    <citation type="journal article" date="2013" name="AAPS J.">
        <title>Functional analysis of novel polymorphisms in the human SLCO1A2 gene that encodes the transporter OATP1A2.</title>
        <authorList>
            <person name="Zhou F."/>
            <person name="Zheng J."/>
            <person name="Zhu L."/>
            <person name="Jodal A."/>
            <person name="Cui P.H."/>
            <person name="Wong M."/>
            <person name="Gurney H."/>
            <person name="Church W.B."/>
            <person name="Murray M."/>
        </authorList>
    </citation>
    <scope>FUNCTION</scope>
    <scope>TRANSPORTER ACTIVITY</scope>
</reference>
<reference key="16">
    <citation type="journal article" date="2013" name="Clin. Cancer Res.">
        <title>Influence of human OATP1B1, OATP1B3, and OATP1A2 on the pharmacokinetics of methotrexate and paclitaxel in humanized transgenic mice.</title>
        <authorList>
            <person name="van de Steeg E."/>
            <person name="van Esch A."/>
            <person name="Wagenaar E."/>
            <person name="Kenworthy K.E."/>
            <person name="Schinkel A.H."/>
        </authorList>
    </citation>
    <scope>FUNCTION</scope>
</reference>
<reference key="17">
    <citation type="journal article" date="2015" name="Br. J. Pharmacol.">
        <title>Human organic anion transporting polypeptide 1A2 (OATP1A2) mediates cellular uptake of all-trans-retinol in human retinal pigmented epithelial cells.</title>
        <authorList>
            <person name="Chan T."/>
            <person name="Zhu L."/>
            <person name="Madigan M.C."/>
            <person name="Wang K."/>
            <person name="Shen W."/>
            <person name="Gillies M.C."/>
            <person name="Zhou F."/>
        </authorList>
    </citation>
    <scope>FUNCTION</scope>
    <scope>TRANSPORTER ACTIVITY</scope>
    <scope>BIOPHYSICOCHEMICAL PROPERTIES</scope>
    <scope>TISSUE SPECIFICITY</scope>
</reference>
<reference key="18">
    <citation type="journal article" date="2015" name="Pflugers Arch.">
        <title>Differential cellular expression of organic anion transporting peptides OATP1A2 and OATP2B1 in the human retina and brain: implications for carrier-mediated transport of neuropeptides and neurosteriods in the CNS.</title>
        <authorList>
            <person name="Gao B."/>
            <person name="Vavricka S.R."/>
            <person name="Meier P.J."/>
            <person name="Stieger B."/>
        </authorList>
    </citation>
    <scope>FUNCTION</scope>
    <scope>TRANSPORTER ACTIVITY</scope>
    <scope>BIOPHYSICOCHEMICAL PROPERTIES</scope>
    <scope>SUBCELLULAR LOCATION</scope>
    <scope>TISSUE SPECIFICITY</scope>
</reference>
<reference key="19">
    <citation type="journal article" date="2017" name="Mol. Pharmacol.">
        <title>Contribution of Organic Anion-Transporting Polypeptides 1A/1B to Doxorubicin Uptake and Clearance.</title>
        <authorList>
            <person name="Lee H.H."/>
            <person name="Leake B.F."/>
            <person name="Kim R.B."/>
            <person name="Ho R.H."/>
        </authorList>
    </citation>
    <scope>FUNCTION</scope>
</reference>
<reference key="20">
    <citation type="journal article" date="2022" name="Drug Metab. Dispos.">
        <title>Localization of Xenobiotic Transporters Expressed at the Human Blood-Testis Barrier.</title>
        <authorList>
            <person name="Hau R.K."/>
            <person name="Klein R.R."/>
            <person name="Wright S.H."/>
            <person name="Cherrington N.J."/>
        </authorList>
    </citation>
    <scope>FUNCTION</scope>
    <scope>SUBCELLULAR LOCATION</scope>
    <scope>TISSUE SPECIFICITY</scope>
</reference>
<reference key="21">
    <citation type="journal article" date="2005" name="J. Biol. Chem.">
        <title>Polymorphisms in human organic anion-transporting polypeptide 1A2 (OATP1A2): implications for altered drug disposition and central nervous system drug entry.</title>
        <authorList>
            <person name="Lee W."/>
            <person name="Glaeser H."/>
            <person name="Smith L.H."/>
            <person name="Roberts R.L."/>
            <person name="Moeckel G.W."/>
            <person name="Gervasini G."/>
            <person name="Leake B.F."/>
            <person name="Kim R.B."/>
        </authorList>
    </citation>
    <scope>VARIANTS THR-13; TYR-128; ILE-135; ASP-172; THR-187 AND SER-668</scope>
    <scope>TISSUE SPECIFICITY</scope>
    <scope>SUBCELLULAR LOCATION</scope>
</reference>
<reference key="22">
    <citation type="journal article" date="2006" name="Science">
        <title>The consensus coding sequences of human breast and colorectal cancers.</title>
        <authorList>
            <person name="Sjoeblom T."/>
            <person name="Jones S."/>
            <person name="Wood L.D."/>
            <person name="Parsons D.W."/>
            <person name="Lin J."/>
            <person name="Barber T.D."/>
            <person name="Mandelker D."/>
            <person name="Leary R.J."/>
            <person name="Ptak J."/>
            <person name="Silliman N."/>
            <person name="Szabo S."/>
            <person name="Buckhaults P."/>
            <person name="Farrell C."/>
            <person name="Meeh P."/>
            <person name="Markowitz S.D."/>
            <person name="Willis J."/>
            <person name="Dawson D."/>
            <person name="Willson J.K.V."/>
            <person name="Gazdar A.F."/>
            <person name="Hartigan J."/>
            <person name="Wu L."/>
            <person name="Liu C."/>
            <person name="Parmigiani G."/>
            <person name="Park B.H."/>
            <person name="Bachman K.E."/>
            <person name="Papadopoulos N."/>
            <person name="Vogelstein B."/>
            <person name="Kinzler K.W."/>
            <person name="Velculescu V.E."/>
        </authorList>
    </citation>
    <scope>VARIANT [LARGE SCALE ANALYSIS] ILE-220</scope>
</reference>
<accession>P46721</accession>
<accession>Q9UGP7</accession>
<accession>Q9UL38</accession>
<comment type="function">
    <text evidence="1 2 6 8 11 12 13 14 15 16 17 18 19 21 22 27">Na(+)-independent transporter that mediates the cellular uptake of a broad range of organic anions such as the endogenous bile salts cholate and deoxycholate, either in their unconjugated or conjugated forms (taurocholate and glycocholate), at the plasmam membrane (PubMed:19129463, PubMed:7557095). Responsible for intestinal absorption of bile acids (By similarity). Transports dehydroepiandrosterone 3-sulfate (DHEAS), a major circulating steroid secreted by the adrenal cortex, as well as estrone 3-sulfate and 17beta-estradiol 17-O-(beta-D-glucuronate) (PubMed:11159893, PubMed:12568656, PubMed:19129463, PubMed:23918469, PubMed:25560245, PubMed:9539145). Mediates apical uptake of all-trans-retinol (atROL) across human retinal pigment epithelium, which is essential to maintaining the integrity of the visual cycle and thus vision (PubMed:25560245). Involved in the uptake of clinically used drugs (PubMed:17301733, PubMed:20686826, PubMed:27777271). Capable of thyroid hormone transport (both T3 or 3,3',5'-triiodo-L-thyronine, and T4 or L-tyroxine) (PubMed:19129463, PubMed:20358049). Also transports prostaglandin E2 (PubMed:19129463). Plays roles in blood-brain and -cerebrospinal fluid barrier transport of organic anions and signal mediators, and in hormone uptake by neural cells (By similarity). May also play a role in the reuptake of neuropeptides such as substance P/TAC1 and vasoactive intestinal peptide/VIP released from retinal neurons (PubMed:25132355). May play an important role in plasma and tissue distribution of the structurally diverse chemotherapeutic drugs methotrexate and paclitaxel (PubMed:23243220). Shows a pH-sensitive substrate specificity which may be ascribed to the protonation state of the binding site and leads to a stimulation of substrate transport in an acidic microenvironment (PubMed:19129463). Hydrogencarbonate/HCO3(-) acts as the probable counteranion that exchanges for organic anions (PubMed:19129463). May contribute to regulate the transport of organic compounds in testis across the blood-testis-barrier (Probable).</text>
</comment>
<comment type="catalytic activity">
    <reaction evidence="21 25">
        <text>taurocholate(out) = taurocholate(in)</text>
        <dbReference type="Rhea" id="RHEA:71703"/>
        <dbReference type="ChEBI" id="CHEBI:36257"/>
    </reaction>
</comment>
<comment type="catalytic activity">
    <reaction evidence="21">
        <text>glycocholate(out) = glycocholate(in)</text>
        <dbReference type="Rhea" id="RHEA:71851"/>
        <dbReference type="ChEBI" id="CHEBI:29746"/>
    </reaction>
</comment>
<comment type="catalytic activity">
    <reaction evidence="21">
        <text>taurochenodeoxycholate(out) = taurochenodeoxycholate(in)</text>
        <dbReference type="Rhea" id="RHEA:71855"/>
        <dbReference type="ChEBI" id="CHEBI:9407"/>
    </reaction>
</comment>
<comment type="catalytic activity">
    <reaction evidence="21">
        <text>tauroursodeoxycholate(out) = tauroursodeoxycholate(in)</text>
        <dbReference type="Rhea" id="RHEA:71843"/>
        <dbReference type="ChEBI" id="CHEBI:132028"/>
    </reaction>
</comment>
<comment type="catalytic activity">
    <reaction evidence="22">
        <text>dehydroepiandrosterone 3-sulfate(out) = dehydroepiandrosterone 3-sulfate(in)</text>
        <dbReference type="Rhea" id="RHEA:71839"/>
        <dbReference type="ChEBI" id="CHEBI:57905"/>
    </reaction>
</comment>
<comment type="catalytic activity">
    <reaction evidence="16 18 25">
        <text>estrone 3-sulfate(out) = estrone 3-sulfate(in)</text>
        <dbReference type="Rhea" id="RHEA:71835"/>
        <dbReference type="ChEBI" id="CHEBI:60050"/>
    </reaction>
</comment>
<comment type="catalytic activity">
    <reaction evidence="13">
        <text>3,3',5'-triiodo-L-thyronine(out) = 3,3',5'-triiodo-L-thyronine(in)</text>
        <dbReference type="Rhea" id="RHEA:71815"/>
        <dbReference type="ChEBI" id="CHEBI:57261"/>
    </reaction>
</comment>
<comment type="catalytic activity">
    <reaction evidence="13 25">
        <text>L-thyroxine(out) = L-thyroxine(in)</text>
        <dbReference type="Rhea" id="RHEA:71819"/>
        <dbReference type="ChEBI" id="CHEBI:58448"/>
    </reaction>
</comment>
<comment type="catalytic activity">
    <reaction evidence="1">
        <text>taurodeoxycholate(out) = taurodeoxycholate(in)</text>
        <dbReference type="Rhea" id="RHEA:71863"/>
        <dbReference type="ChEBI" id="CHEBI:36261"/>
    </reaction>
</comment>
<comment type="catalytic activity">
    <reaction evidence="1">
        <text>glycodeoxycholate(out) = glycodeoxycholate(in)</text>
        <dbReference type="Rhea" id="RHEA:71867"/>
        <dbReference type="ChEBI" id="CHEBI:82982"/>
    </reaction>
</comment>
<comment type="catalytic activity">
    <reaction evidence="1">
        <text>glycochenodeoxycholate(out) = glycochenodeoxycholate(in)</text>
        <dbReference type="Rhea" id="RHEA:71859"/>
        <dbReference type="ChEBI" id="CHEBI:36252"/>
    </reaction>
</comment>
<comment type="catalytic activity">
    <reaction evidence="1">
        <text>glycoursodeoxycholate(out) = glycoursodeoxycholate(in)</text>
        <dbReference type="Rhea" id="RHEA:71847"/>
        <dbReference type="ChEBI" id="CHEBI:132030"/>
    </reaction>
</comment>
<comment type="catalytic activity">
    <reaction evidence="8">
        <text>17beta-estradiol 17-O-(beta-D-glucuronate)(out) = 17beta-estradiol 17-O-(beta-D-glucuronate)(in)</text>
        <dbReference type="Rhea" id="RHEA:72691"/>
        <dbReference type="ChEBI" id="CHEBI:82961"/>
    </reaction>
</comment>
<comment type="catalytic activity">
    <reaction evidence="25">
        <text>prostaglandin E2(out) = prostaglandin E2(in)</text>
        <dbReference type="Rhea" id="RHEA:50984"/>
        <dbReference type="ChEBI" id="CHEBI:606564"/>
    </reaction>
</comment>
<comment type="catalytic activity">
    <reaction evidence="26">
        <text>substance P(out) = substance P(in)</text>
        <dbReference type="Rhea" id="RHEA:74367"/>
        <dbReference type="ChEBI" id="CHEBI:190692"/>
    </reaction>
</comment>
<comment type="activity regulation">
    <text evidence="11">Transport activity is inhibited by the grapefruit juice component naringin.</text>
</comment>
<comment type="biophysicochemical properties">
    <kinetics>
        <KM evidence="21">93 uM for cholate</KM>
        <KM evidence="21">60 uM for taurocholate</KM>
        <KM evidence="21">19 uM for glycocholate</KM>
        <KM evidence="21">19 uM for taurochenodeoxycholate</KM>
        <KM evidence="21">19 uM for tauroursodeoxycholate</KM>
        <KM evidence="22">6.6 uM for dehydroeepiandrosterone 3-sulfate</KM>
        <KM evidence="18">90 uM for all-trans-retinol (aproximate value)</KM>
        <KM evidence="17">76 uM for substance P/TAC1</KM>
        <KM evidence="17">73 uM for vasoactive intestinal peptide/VIP</KM>
    </kinetics>
    <phDependence>
        <text evidence="12">Optimum pH is 6.5 with estrone 3-sulfate, taurocholate, prostaglandin E2 and L-thyroxine (T4) as substrates.</text>
    </phDependence>
</comment>
<comment type="subcellular location">
    <subcellularLocation>
        <location evidence="9 17">Cell membrane</location>
        <topology evidence="24">Multi-pass membrane protein</topology>
    </subcellularLocation>
    <subcellularLocation>
        <location evidence="20">Basal cell membrane</location>
        <topology evidence="24">Multi-pass membrane protein</topology>
    </subcellularLocation>
    <text evidence="20">Localized to the basal membrane of Sertoli cells.</text>
</comment>
<comment type="alternative products">
    <event type="alternative splicing"/>
    <isoform>
        <id>P46721-1</id>
        <name>OATP1a</name>
        <sequence type="displayed"/>
    </isoform>
    <isoform>
        <id>P46721-2</id>
        <name>OATP1b</name>
        <sequence type="described" ref="VSP_006130 VSP_006131 VSP_006132"/>
    </isoform>
</comment>
<comment type="tissue specificity">
    <text evidence="5 7 9 17 18 20 21 22">Higher expression in the brain than in liver and kidney (PubMed:15632119, PubMed:7557095, PubMed:9539145). Expressed in brain neurons in both cortex and hippocampus (PubMed:10873595, PubMed:25132355). Expressed in placental trophoblasts (PubMed:12409283). Also expressed in lung and testes at lower levels (PubMed:7557095). Expressed in the eye (at protein level) (PubMed:25560245). Expressed in the retina in the outer and inner nuclear layers, the inner plexiform layer and the ganglion cell layer (PubMed:25132355). Expressed in liver and prostate (PubMed:10873595). In testis, primarily localized to the basal membrane of Sertoli cells and weakly expressed in Leydig cells and within the tubules (PubMed:35307651). Expressed in fetal brain and liver (PubMed:10873595).</text>
</comment>
<comment type="domain">
    <text evidence="25">A conserved histidine residue in the third TMD (His-107) may play an essential role in the pH sensitivity of SLCO1A2/OATP1A2-mediated substrate transport.</text>
</comment>
<comment type="similarity">
    <text evidence="24">Belongs to the organo anion transporter (TC 2.A.60) family.</text>
</comment>
<evidence type="ECO:0000250" key="1">
    <source>
        <dbReference type="UniProtKB" id="O88397"/>
    </source>
</evidence>
<evidence type="ECO:0000250" key="2">
    <source>
        <dbReference type="UniProtKB" id="Q91YY5"/>
    </source>
</evidence>
<evidence type="ECO:0000255" key="3"/>
<evidence type="ECO:0000255" key="4">
    <source>
        <dbReference type="PROSITE-ProRule" id="PRU00798"/>
    </source>
</evidence>
<evidence type="ECO:0000269" key="5">
    <source>
    </source>
</evidence>
<evidence type="ECO:0000269" key="6">
    <source>
    </source>
</evidence>
<evidence type="ECO:0000269" key="7">
    <source>
    </source>
</evidence>
<evidence type="ECO:0000269" key="8">
    <source>
    </source>
</evidence>
<evidence type="ECO:0000269" key="9">
    <source>
    </source>
</evidence>
<evidence type="ECO:0000269" key="10">
    <source>
    </source>
</evidence>
<evidence type="ECO:0000269" key="11">
    <source>
    </source>
</evidence>
<evidence type="ECO:0000269" key="12">
    <source>
    </source>
</evidence>
<evidence type="ECO:0000269" key="13">
    <source>
    </source>
</evidence>
<evidence type="ECO:0000269" key="14">
    <source>
    </source>
</evidence>
<evidence type="ECO:0000269" key="15">
    <source>
    </source>
</evidence>
<evidence type="ECO:0000269" key="16">
    <source>
    </source>
</evidence>
<evidence type="ECO:0000269" key="17">
    <source>
    </source>
</evidence>
<evidence type="ECO:0000269" key="18">
    <source>
    </source>
</evidence>
<evidence type="ECO:0000269" key="19">
    <source>
    </source>
</evidence>
<evidence type="ECO:0000269" key="20">
    <source>
    </source>
</evidence>
<evidence type="ECO:0000269" key="21">
    <source>
    </source>
</evidence>
<evidence type="ECO:0000269" key="22">
    <source>
    </source>
</evidence>
<evidence type="ECO:0000303" key="23">
    <source>
    </source>
</evidence>
<evidence type="ECO:0000305" key="24"/>
<evidence type="ECO:0000305" key="25">
    <source>
    </source>
</evidence>
<evidence type="ECO:0000305" key="26">
    <source>
    </source>
</evidence>
<evidence type="ECO:0000305" key="27">
    <source>
    </source>
</evidence>
<sequence length="670" mass="74145">MGETEKRIETHRIRCLSKLKMFLLAITCAFVSKTLSGSYMNSMLTQIERQFNIPTSLVGFINGSFEIGNLLLIIFVSYFGTKLHRPIMIGIGCVVMGLGCFLKSLPHFLMNQYEYESTVSVSGNLSSNSFLCMENGTQILRPTQDPSECTKEVKSLMWVYVLVGNIVRGMGETPILPLGISYIEDFAKFENSPLYIGLVETGAIIGPLIGLLLASFCANVYVDTGFVNTDDLIITPTDTRWVGAWWFGFLICAGVNVLTAIPFFFLPNTLPKEGLETNADIIKNENEDKQKEEVKKEKYGITKDFLPFMKSLSCNPIYMLFILVSVIQFNAFVNMISFMPKYLEQQYGISSSDAIFLMGIYNLPPICIGYIIGGLIMKKFKITVKQAAHIGCWLSLLEYLLYFLSFLMTCENSSVVGINTSYEGIPQDLYVENDIFADCNVDCNCPSKIWDPVCGNNGLSYLSACLAGCETSIGTGINMVFQNCSCIQTSGNSSAVLGLCDKGPDCSLMLQYFLILSAMSSFIYSLAAIPGYMVLLRCMKSEEKSLGVGLHTFCTRVFAGIPAPIYFGALMDSTCLHWGTLKCGESGACRIYDSTTFRYIYLGLPAALRGSSFVPALIILILLRKCHLPGENASSGTELIETKVKGKENECKDIYQKSTVLKDDELKTKL</sequence>
<organism>
    <name type="scientific">Homo sapiens</name>
    <name type="common">Human</name>
    <dbReference type="NCBI Taxonomy" id="9606"/>
    <lineage>
        <taxon>Eukaryota</taxon>
        <taxon>Metazoa</taxon>
        <taxon>Chordata</taxon>
        <taxon>Craniata</taxon>
        <taxon>Vertebrata</taxon>
        <taxon>Euteleostomi</taxon>
        <taxon>Mammalia</taxon>
        <taxon>Eutheria</taxon>
        <taxon>Euarchontoglires</taxon>
        <taxon>Primates</taxon>
        <taxon>Haplorrhini</taxon>
        <taxon>Catarrhini</taxon>
        <taxon>Hominidae</taxon>
        <taxon>Homo</taxon>
    </lineage>
</organism>
<protein>
    <recommendedName>
        <fullName>Solute carrier organic anion transporter family member 1A2</fullName>
        <shortName evidence="23">OATP1A2</shortName>
    </recommendedName>
    <alternativeName>
        <fullName evidence="23">OATP-A</fullName>
    </alternativeName>
    <alternativeName>
        <fullName>Organic anion-transporting polypeptide 1</fullName>
        <shortName evidence="23">OATP-1</shortName>
    </alternativeName>
    <alternativeName>
        <fullName>Sodium-independent organic anion transporter</fullName>
    </alternativeName>
    <alternativeName>
        <fullName>Solute carrier family 21 member 3</fullName>
    </alternativeName>
</protein>
<keyword id="KW-0025">Alternative splicing</keyword>
<keyword id="KW-1003">Cell membrane</keyword>
<keyword id="KW-1015">Disulfide bond</keyword>
<keyword id="KW-0325">Glycoprotein</keyword>
<keyword id="KW-0406">Ion transport</keyword>
<keyword id="KW-0445">Lipid transport</keyword>
<keyword id="KW-0472">Membrane</keyword>
<keyword id="KW-1267">Proteomics identification</keyword>
<keyword id="KW-1185">Reference proteome</keyword>
<keyword id="KW-0812">Transmembrane</keyword>
<keyword id="KW-1133">Transmembrane helix</keyword>
<keyword id="KW-0813">Transport</keyword>
<dbReference type="EMBL" id="U21943">
    <property type="protein sequence ID" value="AAA87732.1"/>
    <property type="molecule type" value="mRNA"/>
</dbReference>
<dbReference type="EMBL" id="AF085224">
    <property type="protein sequence ID" value="AAD52694.1"/>
    <property type="molecule type" value="mRNA"/>
</dbReference>
<dbReference type="EMBL" id="AJ400735">
    <property type="protein sequence ID" value="CAB97006.1"/>
    <property type="molecule type" value="Genomic_DNA"/>
</dbReference>
<dbReference type="EMBL" id="AJ400736">
    <property type="protein sequence ID" value="CAB97006.1"/>
    <property type="status" value="JOINED"/>
    <property type="molecule type" value="Genomic_DNA"/>
</dbReference>
<dbReference type="EMBL" id="AJ400737">
    <property type="protein sequence ID" value="CAB97006.1"/>
    <property type="status" value="JOINED"/>
    <property type="molecule type" value="Genomic_DNA"/>
</dbReference>
<dbReference type="EMBL" id="AJ400738">
    <property type="protein sequence ID" value="CAB97006.1"/>
    <property type="status" value="JOINED"/>
    <property type="molecule type" value="Genomic_DNA"/>
</dbReference>
<dbReference type="EMBL" id="AJ400739">
    <property type="protein sequence ID" value="CAB97006.1"/>
    <property type="status" value="JOINED"/>
    <property type="molecule type" value="Genomic_DNA"/>
</dbReference>
<dbReference type="EMBL" id="AJ400740">
    <property type="protein sequence ID" value="CAB97006.1"/>
    <property type="status" value="JOINED"/>
    <property type="molecule type" value="Genomic_DNA"/>
</dbReference>
<dbReference type="EMBL" id="AJ400741">
    <property type="protein sequence ID" value="CAB97006.1"/>
    <property type="status" value="JOINED"/>
    <property type="molecule type" value="Genomic_DNA"/>
</dbReference>
<dbReference type="EMBL" id="AJ400742">
    <property type="protein sequence ID" value="CAB97006.1"/>
    <property type="status" value="JOINED"/>
    <property type="molecule type" value="Genomic_DNA"/>
</dbReference>
<dbReference type="EMBL" id="AJ400743">
    <property type="protein sequence ID" value="CAB97006.1"/>
    <property type="status" value="JOINED"/>
    <property type="molecule type" value="Genomic_DNA"/>
</dbReference>
<dbReference type="EMBL" id="AJ400744">
    <property type="protein sequence ID" value="CAB97006.1"/>
    <property type="status" value="JOINED"/>
    <property type="molecule type" value="Genomic_DNA"/>
</dbReference>
<dbReference type="EMBL" id="AJ400745">
    <property type="protein sequence ID" value="CAB97006.1"/>
    <property type="status" value="JOINED"/>
    <property type="molecule type" value="Genomic_DNA"/>
</dbReference>
<dbReference type="EMBL" id="AJ400746">
    <property type="protein sequence ID" value="CAB97006.1"/>
    <property type="status" value="JOINED"/>
    <property type="molecule type" value="Genomic_DNA"/>
</dbReference>
<dbReference type="EMBL" id="AJ400747">
    <property type="protein sequence ID" value="CAB97006.1"/>
    <property type="status" value="JOINED"/>
    <property type="molecule type" value="Genomic_DNA"/>
</dbReference>
<dbReference type="EMBL" id="AJ400748">
    <property type="protein sequence ID" value="CAB97006.1"/>
    <property type="status" value="JOINED"/>
    <property type="molecule type" value="Genomic_DNA"/>
</dbReference>
<dbReference type="EMBL" id="AF279784">
    <property type="protein sequence ID" value="AAG30037.1"/>
    <property type="molecule type" value="mRNA"/>
</dbReference>
<dbReference type="EMBL" id="Y08062">
    <property type="protein sequence ID" value="CAB64372.1"/>
    <property type="molecule type" value="Genomic_DNA"/>
</dbReference>
<dbReference type="CCDS" id="CCDS8686.1">
    <molecule id="P46721-1"/>
</dbReference>
<dbReference type="RefSeq" id="NP_001373807.1">
    <molecule id="P46721-1"/>
    <property type="nucleotide sequence ID" value="NM_001386878.1"/>
</dbReference>
<dbReference type="RefSeq" id="NP_001373808.1">
    <molecule id="P46721-1"/>
    <property type="nucleotide sequence ID" value="NM_001386879.1"/>
</dbReference>
<dbReference type="RefSeq" id="NP_001373809.1">
    <molecule id="P46721-1"/>
    <property type="nucleotide sequence ID" value="NM_001386880.1"/>
</dbReference>
<dbReference type="RefSeq" id="NP_001373810.1">
    <molecule id="P46721-1"/>
    <property type="nucleotide sequence ID" value="NM_001386881.1"/>
</dbReference>
<dbReference type="RefSeq" id="NP_001373811.1">
    <molecule id="P46721-1"/>
    <property type="nucleotide sequence ID" value="NM_001386882.2"/>
</dbReference>
<dbReference type="RefSeq" id="NP_066580.1">
    <molecule id="P46721-1"/>
    <property type="nucleotide sequence ID" value="NM_021094.4"/>
</dbReference>
<dbReference type="RefSeq" id="NP_602307.1">
    <molecule id="P46721-1"/>
    <property type="nucleotide sequence ID" value="NM_134431.5"/>
</dbReference>
<dbReference type="RefSeq" id="XP_005253531.1">
    <property type="nucleotide sequence ID" value="XM_005253474.3"/>
</dbReference>
<dbReference type="RefSeq" id="XP_011519120.1">
    <property type="nucleotide sequence ID" value="XM_011520818.1"/>
</dbReference>
<dbReference type="RefSeq" id="XP_011519121.1">
    <molecule id="P46721-1"/>
    <property type="nucleotide sequence ID" value="XM_011520819.2"/>
</dbReference>
<dbReference type="RefSeq" id="XP_024304906.1">
    <molecule id="P46721-1"/>
    <property type="nucleotide sequence ID" value="XM_024449138.2"/>
</dbReference>
<dbReference type="RefSeq" id="XP_054228985.1">
    <molecule id="P46721-1"/>
    <property type="nucleotide sequence ID" value="XM_054373010.1"/>
</dbReference>
<dbReference type="RefSeq" id="XP_054228986.1">
    <molecule id="P46721-1"/>
    <property type="nucleotide sequence ID" value="XM_054373011.1"/>
</dbReference>
<dbReference type="SMR" id="P46721"/>
<dbReference type="FunCoup" id="P46721">
    <property type="interactions" value="93"/>
</dbReference>
<dbReference type="IntAct" id="P46721">
    <property type="interactions" value="1"/>
</dbReference>
<dbReference type="STRING" id="9606.ENSP00000305974"/>
<dbReference type="BindingDB" id="P46721"/>
<dbReference type="ChEMBL" id="CHEMBL1743123"/>
<dbReference type="DrugBank" id="DB04630">
    <property type="generic name" value="Aldosterone"/>
</dbReference>
<dbReference type="DrugBank" id="DB01076">
    <property type="generic name" value="Atorvastatin"/>
</dbReference>
<dbReference type="DrugBank" id="DB14669">
    <property type="generic name" value="Betamethasone phosphate"/>
</dbReference>
<dbReference type="DrugBank" id="DB11591">
    <property type="generic name" value="Bilastine"/>
</dbReference>
<dbReference type="DrugBank" id="DB01222">
    <property type="generic name" value="Budesonide"/>
</dbReference>
<dbReference type="DrugBank" id="DB00887">
    <property type="generic name" value="Bumetanide"/>
</dbReference>
<dbReference type="DrugBank" id="DB00291">
    <property type="generic name" value="Chlorambucil"/>
</dbReference>
<dbReference type="DrugBank" id="DB02659">
    <property type="generic name" value="Cholic Acid"/>
</dbReference>
<dbReference type="DrugBank" id="DB00286">
    <property type="generic name" value="Conjugated estrogens"/>
</dbReference>
<dbReference type="DrugBank" id="DB01380">
    <property type="generic name" value="Cortisone acetate"/>
</dbReference>
<dbReference type="DrugBank" id="DB08912">
    <property type="generic name" value="Dabrafenib"/>
</dbReference>
<dbReference type="DrugBank" id="DB03619">
    <property type="generic name" value="Deoxycholic acid"/>
</dbReference>
<dbReference type="DrugBank" id="DB01234">
    <property type="generic name" value="Dexamethasone"/>
</dbReference>
<dbReference type="DrugBank" id="DB14649">
    <property type="generic name" value="Dexamethasone acetate"/>
</dbReference>
<dbReference type="DrugBank" id="DB09213">
    <property type="generic name" value="Dexibuprofen"/>
</dbReference>
<dbReference type="DrugBank" id="DB01396">
    <property type="generic name" value="Digitoxin"/>
</dbReference>
<dbReference type="DrugBank" id="DB00390">
    <property type="generic name" value="Digoxin"/>
</dbReference>
<dbReference type="DrugBank" id="DB00917">
    <property type="generic name" value="Dinoprostone"/>
</dbReference>
<dbReference type="DrugBank" id="DB00584">
    <property type="generic name" value="Enalapril"/>
</dbReference>
<dbReference type="DrugBank" id="DB00199">
    <property type="generic name" value="Erythromycin"/>
</dbReference>
<dbReference type="DrugBank" id="DB13952">
    <property type="generic name" value="Estradiol acetate"/>
</dbReference>
<dbReference type="DrugBank" id="DB13953">
    <property type="generic name" value="Estradiol benzoate"/>
</dbReference>
<dbReference type="DrugBank" id="DB13954">
    <property type="generic name" value="Estradiol cypionate"/>
</dbReference>
<dbReference type="DrugBank" id="DB13955">
    <property type="generic name" value="Estradiol dienanthate"/>
</dbReference>
<dbReference type="DrugBank" id="DB13956">
    <property type="generic name" value="Estradiol valerate"/>
</dbReference>
<dbReference type="DrugBank" id="DB04573">
    <property type="generic name" value="Estriol"/>
</dbReference>
<dbReference type="DrugBank" id="DB14641">
    <property type="generic name" value="Estriol tripropionate"/>
</dbReference>
<dbReference type="DrugBank" id="DB00655">
    <property type="generic name" value="Estrone"/>
</dbReference>
<dbReference type="DrugBank" id="DB00977">
    <property type="generic name" value="Ethinylestradiol"/>
</dbReference>
<dbReference type="DrugBank" id="DB01590">
    <property type="generic name" value="Everolimus"/>
</dbReference>
<dbReference type="DrugBank" id="DB00950">
    <property type="generic name" value="Fexofenadine"/>
</dbReference>
<dbReference type="DrugBank" id="DB01016">
    <property type="generic name" value="Glyburide"/>
</dbReference>
<dbReference type="DrugBank" id="DB02123">
    <property type="generic name" value="Glycochenodeoxycholic Acid"/>
</dbReference>
<dbReference type="DrugBank" id="DB02691">
    <property type="generic name" value="Glycocholic acid"/>
</dbReference>
<dbReference type="DrugBank" id="DB00741">
    <property type="generic name" value="Hydrocortisone"/>
</dbReference>
<dbReference type="DrugBank" id="DB14538">
    <property type="generic name" value="Hydrocortisone aceponate"/>
</dbReference>
<dbReference type="DrugBank" id="DB14539">
    <property type="generic name" value="Hydrocortisone acetate"/>
</dbReference>
<dbReference type="DrugBank" id="DB14540">
    <property type="generic name" value="Hydrocortisone butyrate"/>
</dbReference>
<dbReference type="DrugBank" id="DB14541">
    <property type="generic name" value="Hydrocortisone cypionate"/>
</dbReference>
<dbReference type="DrugBank" id="DB14542">
    <property type="generic name" value="Hydrocortisone phosphate"/>
</dbReference>
<dbReference type="DrugBank" id="DB14543">
    <property type="generic name" value="Hydrocortisone probutate"/>
</dbReference>
<dbReference type="DrugBank" id="DB14544">
    <property type="generic name" value="Hydrocortisone valerate"/>
</dbReference>
<dbReference type="DrugBank" id="DB01611">
    <property type="generic name" value="Hydroxychloroquine"/>
</dbReference>
<dbReference type="DrugBank" id="DB01005">
    <property type="generic name" value="Hydroxyurea"/>
</dbReference>
<dbReference type="DrugBank" id="DB01050">
    <property type="generic name" value="Ibuprofen"/>
</dbReference>
<dbReference type="DrugBank" id="DB00619">
    <property type="generic name" value="Imatinib"/>
</dbReference>
<dbReference type="DrugBank" id="DB00224">
    <property type="generic name" value="Indinavir"/>
</dbReference>
<dbReference type="DrugBank" id="DB00328">
    <property type="generic name" value="Indomethacin"/>
</dbReference>
<dbReference type="DrugBank" id="DB01009">
    <property type="generic name" value="Ketoprofen"/>
</dbReference>
<dbReference type="DrugBank" id="DB01137">
    <property type="generic name" value="Levofloxacin"/>
</dbReference>
<dbReference type="DrugBank" id="DB00451">
    <property type="generic name" value="Levothyroxine"/>
</dbReference>
<dbReference type="DrugBank" id="DB11611">
    <property type="generic name" value="Lifitegrast"/>
</dbReference>
<dbReference type="DrugBank" id="DB00279">
    <property type="generic name" value="Liothyronine"/>
</dbReference>
<dbReference type="DrugBank" id="DB01583">
    <property type="generic name" value="Liotrix"/>
</dbReference>
<dbReference type="DrugBank" id="DB00227">
    <property type="generic name" value="Lovastatin"/>
</dbReference>
<dbReference type="DrugBank" id="DB00253">
    <property type="generic name" value="Medrysone"/>
</dbReference>
<dbReference type="DrugBank" id="DB00563">
    <property type="generic name" value="Methotrexate"/>
</dbReference>
<dbReference type="DrugBank" id="DB06710">
    <property type="generic name" value="Methyltestosterone"/>
</dbReference>
<dbReference type="DrugBank" id="DB08893">
    <property type="generic name" value="Mirabegron"/>
</dbReference>
<dbReference type="DrugBank" id="DB01183">
    <property type="generic name" value="Naloxone"/>
</dbReference>
<dbReference type="DrugBank" id="DB00788">
    <property type="generic name" value="Naproxen"/>
</dbReference>
<dbReference type="DrugBank" id="DB00220">
    <property type="generic name" value="Nelfinavir"/>
</dbReference>
<dbReference type="DrugBank" id="DB01092">
    <property type="generic name" value="Ouabain"/>
</dbReference>
<dbReference type="DrugBank" id="DB01708">
    <property type="generic name" value="Prasterone"/>
</dbReference>
<dbReference type="DrugBank" id="DB05804">
    <property type="generic name" value="Prasterone sulfate"/>
</dbReference>
<dbReference type="DrugBank" id="DB00175">
    <property type="generic name" value="Pravastatin"/>
</dbReference>
<dbReference type="DrugBank" id="DB00860">
    <property type="generic name" value="Prednisolone"/>
</dbReference>
<dbReference type="DrugBank" id="DB15566">
    <property type="generic name" value="Prednisolone acetate"/>
</dbReference>
<dbReference type="DrugBank" id="DB14631">
    <property type="generic name" value="Prednisolone phosphate"/>
</dbReference>
<dbReference type="DrugBank" id="DB00635">
    <property type="generic name" value="Prednisone"/>
</dbReference>
<dbReference type="DrugBank" id="DB01032">
    <property type="generic name" value="Probenecid"/>
</dbReference>
<dbReference type="DrugBank" id="DB00908">
    <property type="generic name" value="Quinidine"/>
</dbReference>
<dbReference type="DrugBank" id="DB00468">
    <property type="generic name" value="Quinine"/>
</dbReference>
<dbReference type="DrugBank" id="DB01045">
    <property type="generic name" value="Rifampin"/>
</dbReference>
<dbReference type="DrugBank" id="DB11753">
    <property type="generic name" value="Rifamycin"/>
</dbReference>
<dbReference type="DrugBank" id="DB00503">
    <property type="generic name" value="Ritonavir"/>
</dbReference>
<dbReference type="DrugBank" id="DB00728">
    <property type="generic name" value="Rocuronium"/>
</dbReference>
<dbReference type="DrugBank" id="DB01098">
    <property type="generic name" value="Rosuvastatin"/>
</dbReference>
<dbReference type="DrugBank" id="DB01232">
    <property type="generic name" value="Saquinavir"/>
</dbReference>
<dbReference type="DrugBank" id="DB00641">
    <property type="generic name" value="Simvastatin"/>
</dbReference>
<dbReference type="DrugBank" id="DB00421">
    <property type="generic name" value="Spironolactone"/>
</dbReference>
<dbReference type="DrugBank" id="DB00669">
    <property type="generic name" value="Sumatriptan"/>
</dbReference>
<dbReference type="DrugBank" id="DB08833">
    <property type="generic name" value="Taurochenodeoxycholic acid"/>
</dbReference>
<dbReference type="DrugBank" id="DB04348">
    <property type="generic name" value="Taurocholic acid"/>
</dbReference>
<dbReference type="DrugBank" id="DB08834">
    <property type="generic name" value="Tauroursodeoxycholic acid"/>
</dbReference>
<dbReference type="DrugBank" id="DB08836">
    <property type="generic name" value="Temocapril"/>
</dbReference>
<dbReference type="DrugBank" id="DB13943">
    <property type="generic name" value="Testosterone cypionate"/>
</dbReference>
<dbReference type="DrugBank" id="DB13944">
    <property type="generic name" value="Testosterone enanthate"/>
</dbReference>
<dbReference type="DrugBank" id="DB13946">
    <property type="generic name" value="Testosterone undecanoate"/>
</dbReference>
<dbReference type="DrugBank" id="DB01124">
    <property type="generic name" value="Tolbutamide"/>
</dbReference>
<dbReference type="DrugBank" id="DB01586">
    <property type="generic name" value="Ursodeoxycholic acid"/>
</dbReference>
<dbReference type="DrugBank" id="DB00661">
    <property type="generic name" value="Verapamil"/>
</dbReference>
<dbReference type="DrugCentral" id="P46721"/>
<dbReference type="GuidetoPHARMACOLOGY" id="1219"/>
<dbReference type="TCDB" id="2.A.60.1.14">
    <property type="family name" value="the organo anion transporter (oat) family"/>
</dbReference>
<dbReference type="GlyCosmos" id="P46721">
    <property type="glycosylation" value="4 sites, No reported glycans"/>
</dbReference>
<dbReference type="GlyGen" id="P46721">
    <property type="glycosylation" value="8 sites"/>
</dbReference>
<dbReference type="iPTMnet" id="P46721"/>
<dbReference type="PhosphoSitePlus" id="P46721"/>
<dbReference type="BioMuta" id="SLCO1A2"/>
<dbReference type="DMDM" id="1171882"/>
<dbReference type="jPOST" id="P46721"/>
<dbReference type="MassIVE" id="P46721"/>
<dbReference type="PaxDb" id="9606-ENSP00000305974"/>
<dbReference type="PeptideAtlas" id="P46721"/>
<dbReference type="Antibodypedia" id="12308">
    <property type="antibodies" value="119 antibodies from 21 providers"/>
</dbReference>
<dbReference type="DNASU" id="6579"/>
<dbReference type="Ensembl" id="ENST00000307378.10">
    <molecule id="P46721-1"/>
    <property type="protein sequence ID" value="ENSP00000305974.6"/>
    <property type="gene ID" value="ENSG00000084453.17"/>
</dbReference>
<dbReference type="Ensembl" id="ENST00000683939.1">
    <molecule id="P46721-1"/>
    <property type="protein sequence ID" value="ENSP00000508235.1"/>
    <property type="gene ID" value="ENSG00000084453.17"/>
</dbReference>
<dbReference type="GeneID" id="6579"/>
<dbReference type="KEGG" id="hsa:6579"/>
<dbReference type="MANE-Select" id="ENST00000683939.1">
    <property type="protein sequence ID" value="ENSP00000508235.1"/>
    <property type="RefSeq nucleotide sequence ID" value="NM_001386879.1"/>
    <property type="RefSeq protein sequence ID" value="NP_001373808.1"/>
</dbReference>
<dbReference type="UCSC" id="uc001res.3">
    <molecule id="P46721-1"/>
    <property type="organism name" value="human"/>
</dbReference>
<dbReference type="AGR" id="HGNC:10956"/>
<dbReference type="CTD" id="6579"/>
<dbReference type="DisGeNET" id="6579"/>
<dbReference type="GeneCards" id="SLCO1A2"/>
<dbReference type="HGNC" id="HGNC:10956">
    <property type="gene designation" value="SLCO1A2"/>
</dbReference>
<dbReference type="HPA" id="ENSG00000084453">
    <property type="expression patterns" value="Group enriched (brain, salivary gland)"/>
</dbReference>
<dbReference type="MalaCards" id="SLCO1A2"/>
<dbReference type="MIM" id="602883">
    <property type="type" value="gene"/>
</dbReference>
<dbReference type="neXtProt" id="NX_P46721"/>
<dbReference type="OpenTargets" id="ENSG00000084453"/>
<dbReference type="PharmGKB" id="PA328"/>
<dbReference type="VEuPathDB" id="HostDB:ENSG00000084453"/>
<dbReference type="eggNOG" id="KOG3626">
    <property type="taxonomic scope" value="Eukaryota"/>
</dbReference>
<dbReference type="GeneTree" id="ENSGT01130000278312"/>
<dbReference type="HOGENOM" id="CLU_008954_4_0_1"/>
<dbReference type="InParanoid" id="P46721"/>
<dbReference type="OMA" id="DCNMDCN"/>
<dbReference type="OrthoDB" id="5062115at2759"/>
<dbReference type="PAN-GO" id="P46721">
    <property type="GO annotations" value="5 GO annotations based on evolutionary models"/>
</dbReference>
<dbReference type="PhylomeDB" id="P46721"/>
<dbReference type="TreeFam" id="TF317540"/>
<dbReference type="PathwayCommons" id="P46721"/>
<dbReference type="Reactome" id="R-HSA-159418">
    <property type="pathway name" value="Recycling of bile acids and salts"/>
</dbReference>
<dbReference type="Reactome" id="R-HSA-879518">
    <property type="pathway name" value="Transport of organic anions"/>
</dbReference>
<dbReference type="Reactome" id="R-HSA-9793528">
    <property type="pathway name" value="Ciprofloxacin ADME"/>
</dbReference>
<dbReference type="SignaLink" id="P46721"/>
<dbReference type="BioGRID-ORCS" id="6579">
    <property type="hits" value="16 hits in 1148 CRISPR screens"/>
</dbReference>
<dbReference type="ChiTaRS" id="SLCO1A2">
    <property type="organism name" value="human"/>
</dbReference>
<dbReference type="GeneWiki" id="SLCO1A2"/>
<dbReference type="GenomeRNAi" id="6579"/>
<dbReference type="Pharos" id="P46721">
    <property type="development level" value="Tchem"/>
</dbReference>
<dbReference type="PRO" id="PR:P46721"/>
<dbReference type="Proteomes" id="UP000005640">
    <property type="component" value="Chromosome 12"/>
</dbReference>
<dbReference type="RNAct" id="P46721">
    <property type="molecule type" value="protein"/>
</dbReference>
<dbReference type="Bgee" id="ENSG00000084453">
    <property type="expression patterns" value="Expressed in C1 segment of cervical spinal cord and 113 other cell types or tissues"/>
</dbReference>
<dbReference type="ExpressionAtlas" id="P46721">
    <property type="expression patterns" value="baseline and differential"/>
</dbReference>
<dbReference type="GO" id="GO:0016324">
    <property type="term" value="C:apical plasma membrane"/>
    <property type="evidence" value="ECO:0000304"/>
    <property type="project" value="Reactome"/>
</dbReference>
<dbReference type="GO" id="GO:0009925">
    <property type="term" value="C:basal plasma membrane"/>
    <property type="evidence" value="ECO:0000314"/>
    <property type="project" value="UniProtKB"/>
</dbReference>
<dbReference type="GO" id="GO:0016323">
    <property type="term" value="C:basolateral plasma membrane"/>
    <property type="evidence" value="ECO:0000318"/>
    <property type="project" value="GO_Central"/>
</dbReference>
<dbReference type="GO" id="GO:0005886">
    <property type="term" value="C:plasma membrane"/>
    <property type="evidence" value="ECO:0000314"/>
    <property type="project" value="HPA"/>
</dbReference>
<dbReference type="GO" id="GO:0015125">
    <property type="term" value="F:bile acid transmembrane transporter activity"/>
    <property type="evidence" value="ECO:0000318"/>
    <property type="project" value="GO_Central"/>
</dbReference>
<dbReference type="GO" id="GO:0008514">
    <property type="term" value="F:organic anion transmembrane transporter activity"/>
    <property type="evidence" value="ECO:0000314"/>
    <property type="project" value="UniProtKB"/>
</dbReference>
<dbReference type="GO" id="GO:0015101">
    <property type="term" value="F:organic cation transmembrane transporter activity"/>
    <property type="evidence" value="ECO:0000304"/>
    <property type="project" value="Reactome"/>
</dbReference>
<dbReference type="GO" id="GO:0015347">
    <property type="term" value="F:sodium-independent organic anion transmembrane transporter activity"/>
    <property type="evidence" value="ECO:0000318"/>
    <property type="project" value="GO_Central"/>
</dbReference>
<dbReference type="GO" id="GO:0022857">
    <property type="term" value="F:transmembrane transporter activity"/>
    <property type="evidence" value="ECO:0000314"/>
    <property type="project" value="UniProtKB"/>
</dbReference>
<dbReference type="GO" id="GO:0015721">
    <property type="term" value="P:bile acid and bile salt transport"/>
    <property type="evidence" value="ECO:0000318"/>
    <property type="project" value="GO_Central"/>
</dbReference>
<dbReference type="GO" id="GO:0006811">
    <property type="term" value="P:monoatomic ion transport"/>
    <property type="evidence" value="ECO:0007669"/>
    <property type="project" value="UniProtKB-KW"/>
</dbReference>
<dbReference type="GO" id="GO:0015711">
    <property type="term" value="P:organic anion transport"/>
    <property type="evidence" value="ECO:0000304"/>
    <property type="project" value="ProtInc"/>
</dbReference>
<dbReference type="GO" id="GO:0043252">
    <property type="term" value="P:sodium-independent organic anion transport"/>
    <property type="evidence" value="ECO:0000318"/>
    <property type="project" value="GO_Central"/>
</dbReference>
<dbReference type="GO" id="GO:0006805">
    <property type="term" value="P:xenobiotic metabolic process"/>
    <property type="evidence" value="ECO:0000304"/>
    <property type="project" value="Reactome"/>
</dbReference>
<dbReference type="CDD" id="cd17458">
    <property type="entry name" value="MFS_SLCO1A_OATP1A"/>
    <property type="match status" value="1"/>
</dbReference>
<dbReference type="FunFam" id="1.20.1250.20:FF:000210">
    <property type="entry name" value="Solute carrier organic anion transporter family member"/>
    <property type="match status" value="1"/>
</dbReference>
<dbReference type="Gene3D" id="1.20.1250.20">
    <property type="entry name" value="MFS general substrate transporter like domains"/>
    <property type="match status" value="1"/>
</dbReference>
<dbReference type="InterPro" id="IPR002350">
    <property type="entry name" value="Kazal_dom"/>
</dbReference>
<dbReference type="InterPro" id="IPR036058">
    <property type="entry name" value="Kazal_dom_sf"/>
</dbReference>
<dbReference type="InterPro" id="IPR020846">
    <property type="entry name" value="MFS_dom"/>
</dbReference>
<dbReference type="InterPro" id="IPR036259">
    <property type="entry name" value="MFS_trans_sf"/>
</dbReference>
<dbReference type="InterPro" id="IPR004156">
    <property type="entry name" value="OATP"/>
</dbReference>
<dbReference type="NCBIfam" id="TIGR00805">
    <property type="entry name" value="oat"/>
    <property type="match status" value="1"/>
</dbReference>
<dbReference type="PANTHER" id="PTHR11388">
    <property type="entry name" value="ORGANIC ANION TRANSPORTER"/>
    <property type="match status" value="1"/>
</dbReference>
<dbReference type="PANTHER" id="PTHR11388:SF16">
    <property type="entry name" value="SOLUTE CARRIER ORGANIC ANION TRANSPORTER FAMILY MEMBER 1A2"/>
    <property type="match status" value="1"/>
</dbReference>
<dbReference type="Pfam" id="PF07648">
    <property type="entry name" value="Kazal_2"/>
    <property type="match status" value="1"/>
</dbReference>
<dbReference type="Pfam" id="PF03137">
    <property type="entry name" value="OATP"/>
    <property type="match status" value="1"/>
</dbReference>
<dbReference type="SUPFAM" id="SSF100895">
    <property type="entry name" value="Kazal-type serine protease inhibitors"/>
    <property type="match status" value="1"/>
</dbReference>
<dbReference type="SUPFAM" id="SSF103473">
    <property type="entry name" value="MFS general substrate transporter"/>
    <property type="match status" value="1"/>
</dbReference>
<dbReference type="PROSITE" id="PS51465">
    <property type="entry name" value="KAZAL_2"/>
    <property type="match status" value="1"/>
</dbReference>
<dbReference type="PROSITE" id="PS50850">
    <property type="entry name" value="MFS"/>
    <property type="match status" value="1"/>
</dbReference>
<proteinExistence type="evidence at protein level"/>